<name>DPOL_HBVB7</name>
<evidence type="ECO:0000255" key="1">
    <source>
        <dbReference type="HAMAP-Rule" id="MF_04073"/>
    </source>
</evidence>
<evidence type="ECO:0000256" key="2">
    <source>
        <dbReference type="SAM" id="MobiDB-lite"/>
    </source>
</evidence>
<comment type="function">
    <text evidence="1">Multifunctional enzyme that converts the viral RNA genome into dsDNA in viral cytoplasmic capsids. This enzyme displays a DNA polymerase activity that can copy either DNA or RNA templates, and a ribonuclease H (RNase H) activity that cleaves the RNA strand of RNA-DNA heteroduplexes in a partially processive 3'- to 5'-endonucleasic mode. Neo-synthesized pregenomic RNA (pgRNA) are encapsidated together with the P protein, and reverse-transcribed inside the nucleocapsid. Initiation of reverse-transcription occurs first by binding the epsilon loop on the pgRNA genome, and is initiated by protein priming, thereby the 5'-end of (-)DNA is covalently linked to P protein. Partial (+)DNA is synthesized from the (-)DNA template and generates the relaxed circular DNA (RC-DNA) genome. After budding and infection, the RC-DNA migrates in the nucleus, and is converted into a plasmid-like covalently closed circular DNA (cccDNA). The activity of P protein does not seem to be necessary for cccDNA generation, and is presumably released from (+)DNA by host nuclear DNA repair machinery.</text>
</comment>
<comment type="catalytic activity">
    <reaction evidence="1">
        <text>DNA(n) + a 2'-deoxyribonucleoside 5'-triphosphate = DNA(n+1) + diphosphate</text>
        <dbReference type="Rhea" id="RHEA:22508"/>
        <dbReference type="Rhea" id="RHEA-COMP:17339"/>
        <dbReference type="Rhea" id="RHEA-COMP:17340"/>
        <dbReference type="ChEBI" id="CHEBI:33019"/>
        <dbReference type="ChEBI" id="CHEBI:61560"/>
        <dbReference type="ChEBI" id="CHEBI:173112"/>
        <dbReference type="EC" id="2.7.7.7"/>
    </reaction>
</comment>
<comment type="catalytic activity">
    <reaction evidence="1">
        <text>DNA(n) + a 2'-deoxyribonucleoside 5'-triphosphate = DNA(n+1) + diphosphate</text>
        <dbReference type="Rhea" id="RHEA:22508"/>
        <dbReference type="Rhea" id="RHEA-COMP:17339"/>
        <dbReference type="Rhea" id="RHEA-COMP:17340"/>
        <dbReference type="ChEBI" id="CHEBI:33019"/>
        <dbReference type="ChEBI" id="CHEBI:61560"/>
        <dbReference type="ChEBI" id="CHEBI:173112"/>
        <dbReference type="EC" id="2.7.7.49"/>
    </reaction>
</comment>
<comment type="catalytic activity">
    <reaction evidence="1">
        <text>Endonucleolytic cleavage to 5'-phosphomonoester.</text>
        <dbReference type="EC" id="3.1.26.4"/>
    </reaction>
</comment>
<comment type="activity regulation">
    <text evidence="1">Activated by host HSP70 and HSP40 in vitro to be able to bind the epsilon loop of the pgRNA. Because deletion of the RNase H region renders the protein partly chaperone-independent, the chaperones may be needed indirectly to relieve occlusion of the RNA-binding site by this domain. Inhibited by several reverse-transcriptase inhibitors: Lamivudine, Adefovir and Entecavir.</text>
</comment>
<comment type="domain">
    <text evidence="1">Terminal protein domain (TP) is hepadnavirus-specific. Spacer domain is highly variable and separates the TP and RT domains. Polymerase/reverse-transcriptase domain (RT) and ribonuclease H domain (RH) are similar to retrovirus reverse transcriptase/RNase H.</text>
</comment>
<comment type="domain">
    <text evidence="1">The polymerase/reverse transcriptase (RT) and ribonuclease H (RH) domains are structured in five subdomains: finger, palm, thumb, connection and RNase H. Within the palm subdomain, the 'primer grip' region is thought to be involved in the positioning of the primer terminus for accommodating the incoming nucleotide. The RH domain stabilizes the association of RT with primer-template.</text>
</comment>
<comment type="miscellaneous">
    <text evidence="1">Hepadnaviral virions contain probably just one P protein molecule per particle.</text>
</comment>
<comment type="similarity">
    <text evidence="1">Belongs to the hepadnaviridae P protein family.</text>
</comment>
<feature type="chain" id="PRO_0000323258" description="Protein P">
    <location>
        <begin position="1"/>
        <end position="843"/>
    </location>
</feature>
<feature type="domain" description="Reverse transcriptase" evidence="1">
    <location>
        <begin position="357"/>
        <end position="600"/>
    </location>
</feature>
<feature type="region of interest" description="Terminal protein domain (TP)" evidence="1">
    <location>
        <begin position="1"/>
        <end position="177"/>
    </location>
</feature>
<feature type="region of interest" description="Spacer" evidence="1">
    <location>
        <begin position="178"/>
        <end position="346"/>
    </location>
</feature>
<feature type="region of interest" description="Disordered" evidence="2">
    <location>
        <begin position="220"/>
        <end position="258"/>
    </location>
</feature>
<feature type="region of interest" description="Disordered" evidence="2">
    <location>
        <begin position="292"/>
        <end position="319"/>
    </location>
</feature>
<feature type="region of interest" description="Polymerase/reverse transcriptase domain (RT)" evidence="1">
    <location>
        <begin position="347"/>
        <end position="690"/>
    </location>
</feature>
<feature type="compositionally biased region" description="Low complexity" evidence="2">
    <location>
        <begin position="308"/>
        <end position="319"/>
    </location>
</feature>
<feature type="binding site" evidence="1">
    <location>
        <position position="429"/>
    </location>
    <ligand>
        <name>Mg(2+)</name>
        <dbReference type="ChEBI" id="CHEBI:18420"/>
        <note>catalytic</note>
    </ligand>
</feature>
<feature type="binding site" evidence="1">
    <location>
        <position position="551"/>
    </location>
    <ligand>
        <name>Mg(2+)</name>
        <dbReference type="ChEBI" id="CHEBI:18420"/>
        <note>catalytic</note>
    </ligand>
</feature>
<feature type="binding site" evidence="1">
    <location>
        <position position="552"/>
    </location>
    <ligand>
        <name>Mg(2+)</name>
        <dbReference type="ChEBI" id="CHEBI:18420"/>
        <note>catalytic</note>
    </ligand>
</feature>
<feature type="site" description="Priming of reverse-transcription by covalently linking the first nucleotide of the (-)DNA" evidence="1">
    <location>
        <position position="63"/>
    </location>
</feature>
<gene>
    <name evidence="1" type="primary">P</name>
</gene>
<sequence length="843" mass="94139">MPLSYQHFRKLLLLDDEAGPLEEELPRLADEGLNRRVAEDLNLGNPNVSIPWTHKVGNFTGLYSSTVPVFNPEWQTPSFPDIHLQEDIVDRCKQFVGPLTVNENRRLKLIMPARFYPNVTKYLPLDKGIKPYYPEHVVNHYFQARHYLHTLWKAGILYKRESTHSASFCGSPYSWEQDLQHGRLVFQTSKRHGDKSFCPQSPGILPRSSVGPCIQSQLRKSRLGPQPPQGQLAGRPQGGSGSIRARVHPSPWGTVGVEPSGSGHTHICASSSSSCLHQSAVRKAAYSLISTSKGHSSSGRAVELHHFPPNSSRSQSQGSVPSCWWLQFRNSKPCSEYCLCHIVNLIDDWGPCAEHGEHRIRTPRTPARVTGGVFLVDKNPHNTTESRLVVDFSQFSRGNTRVSWPKFAVPNLQSLTNLLSSNLSWLSLDVSAAFYHLPLHPAAMPHLLVGSSGLSRYVARLSSNSRIINHQHGTMQDLHNSCSRNLYVSLMLLYKTYGRKLHLYSHPIILGFRKIPMGVGLSPFLLAQFTSAICSVVRRAFPHCLAFSYMDDVVLGAKSVQHLESLYAAVTNFLVSLGIHVNPHKTKRWGYSLNFMGYVIGSWGTLPQEHIRQKIKLCFRKLPVNRPIDWKVCQRIVGLLGFAAPFTQCGYPALMPLYACISAKQAFTFSPTYKAFLSQQYLNLYPVARQRSGLCQVFADATPTGWGLAIGHQRMRGTFVSPLPIHTAELLAACFARSRSGAKLIGTDNSVVLSRKYTSFPWLLGCAANWILRGTSFVYVPSALNPADDPSRGRLGLYRPLLRLPYRPTTGRTSLYADSPSVPSHLPDRVHFASPLHVAWRPP</sequence>
<dbReference type="EC" id="2.7.7.7" evidence="1"/>
<dbReference type="EC" id="2.7.7.49" evidence="1"/>
<dbReference type="EC" id="3.1.26.4" evidence="1"/>
<dbReference type="EMBL" id="AB010290">
    <property type="protein sequence ID" value="BAA88281.1"/>
    <property type="molecule type" value="Genomic_DNA"/>
</dbReference>
<dbReference type="Proteomes" id="UP000007918">
    <property type="component" value="Genome"/>
</dbReference>
<dbReference type="GO" id="GO:0003677">
    <property type="term" value="F:DNA binding"/>
    <property type="evidence" value="ECO:0007669"/>
    <property type="project" value="UniProtKB-UniRule"/>
</dbReference>
<dbReference type="GO" id="GO:0003887">
    <property type="term" value="F:DNA-directed DNA polymerase activity"/>
    <property type="evidence" value="ECO:0007669"/>
    <property type="project" value="UniProtKB-UniRule"/>
</dbReference>
<dbReference type="GO" id="GO:0046872">
    <property type="term" value="F:metal ion binding"/>
    <property type="evidence" value="ECO:0007669"/>
    <property type="project" value="UniProtKB-UniRule"/>
</dbReference>
<dbReference type="GO" id="GO:0003964">
    <property type="term" value="F:RNA-directed DNA polymerase activity"/>
    <property type="evidence" value="ECO:0007669"/>
    <property type="project" value="UniProtKB-UniRule"/>
</dbReference>
<dbReference type="GO" id="GO:0004523">
    <property type="term" value="F:RNA-DNA hybrid ribonuclease activity"/>
    <property type="evidence" value="ECO:0007669"/>
    <property type="project" value="UniProtKB-UniRule"/>
</dbReference>
<dbReference type="GO" id="GO:0006260">
    <property type="term" value="P:DNA replication"/>
    <property type="evidence" value="ECO:0007669"/>
    <property type="project" value="UniProtKB-UniRule"/>
</dbReference>
<dbReference type="GO" id="GO:0052170">
    <property type="term" value="P:symbiont-mediated suppression of host innate immune response"/>
    <property type="evidence" value="ECO:0007669"/>
    <property type="project" value="UniProtKB-UniRule"/>
</dbReference>
<dbReference type="FunFam" id="3.30.70.270:FF:000009">
    <property type="entry name" value="Protein P"/>
    <property type="match status" value="1"/>
</dbReference>
<dbReference type="Gene3D" id="3.30.70.270">
    <property type="match status" value="1"/>
</dbReference>
<dbReference type="HAMAP" id="MF_04073">
    <property type="entry name" value="HBV_DPOL"/>
    <property type="match status" value="1"/>
</dbReference>
<dbReference type="InterPro" id="IPR043502">
    <property type="entry name" value="DNA/RNA_pol_sf"/>
</dbReference>
<dbReference type="InterPro" id="IPR001462">
    <property type="entry name" value="DNApol_viral_C"/>
</dbReference>
<dbReference type="InterPro" id="IPR000201">
    <property type="entry name" value="DNApol_viral_N"/>
</dbReference>
<dbReference type="InterPro" id="IPR037531">
    <property type="entry name" value="HBV_DPOL"/>
</dbReference>
<dbReference type="InterPro" id="IPR052055">
    <property type="entry name" value="Hepadnavirus_pol/RT"/>
</dbReference>
<dbReference type="InterPro" id="IPR043128">
    <property type="entry name" value="Rev_trsase/Diguanyl_cyclase"/>
</dbReference>
<dbReference type="InterPro" id="IPR000477">
    <property type="entry name" value="RT_dom"/>
</dbReference>
<dbReference type="PANTHER" id="PTHR33050">
    <property type="entry name" value="REVERSE TRANSCRIPTASE DOMAIN-CONTAINING PROTEIN"/>
    <property type="match status" value="1"/>
</dbReference>
<dbReference type="PANTHER" id="PTHR33050:SF7">
    <property type="entry name" value="RIBONUCLEASE H"/>
    <property type="match status" value="1"/>
</dbReference>
<dbReference type="Pfam" id="PF00336">
    <property type="entry name" value="DNA_pol_viral_C"/>
    <property type="match status" value="1"/>
</dbReference>
<dbReference type="Pfam" id="PF00242">
    <property type="entry name" value="DNA_pol_viral_N"/>
    <property type="match status" value="1"/>
</dbReference>
<dbReference type="Pfam" id="PF00078">
    <property type="entry name" value="RVT_1"/>
    <property type="match status" value="1"/>
</dbReference>
<dbReference type="SUPFAM" id="SSF56672">
    <property type="entry name" value="DNA/RNA polymerases"/>
    <property type="match status" value="1"/>
</dbReference>
<dbReference type="PROSITE" id="PS50878">
    <property type="entry name" value="RT_POL"/>
    <property type="match status" value="1"/>
</dbReference>
<proteinExistence type="inferred from homology"/>
<accession>Q9QBF1</accession>
<organism>
    <name type="scientific">Hepatitis B virus genotype B1 (isolate Japan/Yamagata-2/1998)</name>
    <name type="common">HBV-B</name>
    <dbReference type="NCBI Taxonomy" id="489464"/>
    <lineage>
        <taxon>Viruses</taxon>
        <taxon>Riboviria</taxon>
        <taxon>Pararnavirae</taxon>
        <taxon>Artverviricota</taxon>
        <taxon>Revtraviricetes</taxon>
        <taxon>Blubervirales</taxon>
        <taxon>Hepadnaviridae</taxon>
        <taxon>Orthohepadnavirus</taxon>
        <taxon>Hepatitis B virus</taxon>
    </lineage>
</organism>
<protein>
    <recommendedName>
        <fullName evidence="1">Protein P</fullName>
    </recommendedName>
    <domain>
        <recommendedName>
            <fullName evidence="1">DNA-directed DNA polymerase</fullName>
            <ecNumber evidence="1">2.7.7.7</ecNumber>
        </recommendedName>
    </domain>
    <domain>
        <recommendedName>
            <fullName evidence="1">RNA-directed DNA polymerase</fullName>
            <ecNumber evidence="1">2.7.7.49</ecNumber>
        </recommendedName>
    </domain>
    <domain>
        <recommendedName>
            <fullName evidence="1">Ribonuclease H</fullName>
            <ecNumber evidence="1">3.1.26.4</ecNumber>
        </recommendedName>
    </domain>
</protein>
<organismHost>
    <name type="scientific">Homo sapiens</name>
    <name type="common">Human</name>
    <dbReference type="NCBI Taxonomy" id="9606"/>
</organismHost>
<organismHost>
    <name type="scientific">Pan troglodytes</name>
    <name type="common">Chimpanzee</name>
    <dbReference type="NCBI Taxonomy" id="9598"/>
</organismHost>
<reference key="1">
    <citation type="journal article" date="1999" name="Yamagata Med. J.">
        <title>Sequence analysis of the entire genome of hepatitis B virus from a patient with fulminant hepatitis.</title>
        <authorList>
            <person name="Koseki T."/>
            <person name="Hongo S."/>
            <person name="Muraki Y."/>
            <person name="Sugawara K."/>
            <person name="Matsuzaki Y."/>
            <person name="Nakamura K."/>
        </authorList>
    </citation>
    <scope>NUCLEOTIDE SEQUENCE [GENOMIC DNA]</scope>
</reference>
<reference key="2">
    <citation type="journal article" date="2007" name="World J. Gastroenterol.">
        <title>Hepatitis B virus replication.</title>
        <authorList>
            <person name="Beck J."/>
            <person name="Nassal M."/>
        </authorList>
    </citation>
    <scope>REVIEW</scope>
</reference>
<keyword id="KW-0235">DNA replication</keyword>
<keyword id="KW-0238">DNA-binding</keyword>
<keyword id="KW-0239">DNA-directed DNA polymerase</keyword>
<keyword id="KW-0255">Endonuclease</keyword>
<keyword id="KW-0945">Host-virus interaction</keyword>
<keyword id="KW-0378">Hydrolase</keyword>
<keyword id="KW-1090">Inhibition of host innate immune response by virus</keyword>
<keyword id="KW-1113">Inhibition of host RLR pathway by virus</keyword>
<keyword id="KW-0460">Magnesium</keyword>
<keyword id="KW-0479">Metal-binding</keyword>
<keyword id="KW-0511">Multifunctional enzyme</keyword>
<keyword id="KW-0540">Nuclease</keyword>
<keyword id="KW-0548">Nucleotidyltransferase</keyword>
<keyword id="KW-0695">RNA-directed DNA polymerase</keyword>
<keyword id="KW-0808">Transferase</keyword>
<keyword id="KW-0899">Viral immunoevasion</keyword>